<comment type="function">
    <text evidence="2">Serine protease that cleaves extracellular substrates, and contributes to the proteolytic processing of growth factors, such as HGF and MST1/HGFL. Plays a role in cell growth and maintenance of cell morphology. Plays a role in the proteolytic processing of ACE2. Mediates the proteolytic cleavage of urinary UMOD that is required for UMOD polymerization.</text>
</comment>
<comment type="catalytic activity">
    <reaction evidence="2">
        <text>Cleavage after basic amino-acid residues, with Arg strongly preferred to Lys.</text>
        <dbReference type="EC" id="3.4.21.106"/>
    </reaction>
</comment>
<comment type="subcellular location">
    <subcellularLocation>
        <location evidence="2">Cell membrane</location>
        <topology evidence="2">Single-pass type II membrane protein</topology>
    </subcellularLocation>
    <subcellularLocation>
        <location evidence="2">Apical cell membrane</location>
        <topology evidence="2">Single-pass type II membrane protein</topology>
    </subcellularLocation>
</comment>
<comment type="tissue specificity">
    <text evidence="5">Widely expressed. Present in brain, heart, kidney, liver, stomach, muscle, lung, testis, skin and eye. Not expressed in ovary and thynus. In inner ear tissues, expressed in stria vascularis, modiolus, organ of Corti and spiral ganglion.</text>
</comment>
<comment type="developmental stage">
    <text evidence="5">Expressed during development in embryonic stages 8.5 dpc, 9.5 dpc, 12.5 dpc and 19 dpc.</text>
</comment>
<comment type="similarity">
    <text evidence="4">Belongs to the peptidase S1 family.</text>
</comment>
<accession>Q05511</accession>
<gene>
    <name type="primary">Hpn</name>
</gene>
<name>HEPS_RAT</name>
<dbReference type="EC" id="3.4.21.106" evidence="2"/>
<dbReference type="EMBL" id="X70900">
    <property type="protein sequence ID" value="CAA50256.1"/>
    <property type="molecule type" value="mRNA"/>
</dbReference>
<dbReference type="PIR" id="S33777">
    <property type="entry name" value="S33777"/>
</dbReference>
<dbReference type="RefSeq" id="NP_058808.1">
    <property type="nucleotide sequence ID" value="NM_017112.1"/>
</dbReference>
<dbReference type="SMR" id="Q05511"/>
<dbReference type="FunCoup" id="Q05511">
    <property type="interactions" value="39"/>
</dbReference>
<dbReference type="STRING" id="10116.ENSRNOP00000075632"/>
<dbReference type="MEROPS" id="S01.224"/>
<dbReference type="GlyCosmos" id="Q05511">
    <property type="glycosylation" value="1 site, No reported glycans"/>
</dbReference>
<dbReference type="GlyGen" id="Q05511">
    <property type="glycosylation" value="1 site"/>
</dbReference>
<dbReference type="PhosphoSitePlus" id="Q05511"/>
<dbReference type="PaxDb" id="10116-ENSRNOP00000028644"/>
<dbReference type="GeneID" id="29135"/>
<dbReference type="KEGG" id="rno:29135"/>
<dbReference type="UCSC" id="RGD:61982">
    <property type="organism name" value="rat"/>
</dbReference>
<dbReference type="AGR" id="RGD:61982"/>
<dbReference type="CTD" id="3249"/>
<dbReference type="RGD" id="61982">
    <property type="gene designation" value="Hpn"/>
</dbReference>
<dbReference type="eggNOG" id="KOG3627">
    <property type="taxonomic scope" value="Eukaryota"/>
</dbReference>
<dbReference type="InParanoid" id="Q05511"/>
<dbReference type="PhylomeDB" id="Q05511"/>
<dbReference type="Reactome" id="R-RNO-6806942">
    <property type="pathway name" value="MET Receptor Activation"/>
</dbReference>
<dbReference type="Reactome" id="R-RNO-8852405">
    <property type="pathway name" value="Signaling by MST1"/>
</dbReference>
<dbReference type="PRO" id="PR:Q05511"/>
<dbReference type="Proteomes" id="UP000002494">
    <property type="component" value="Unplaced"/>
</dbReference>
<dbReference type="GO" id="GO:0016324">
    <property type="term" value="C:apical plasma membrane"/>
    <property type="evidence" value="ECO:0007669"/>
    <property type="project" value="UniProtKB-SubCell"/>
</dbReference>
<dbReference type="GO" id="GO:0009986">
    <property type="term" value="C:cell surface"/>
    <property type="evidence" value="ECO:0000250"/>
    <property type="project" value="UniProtKB"/>
</dbReference>
<dbReference type="GO" id="GO:0005911">
    <property type="term" value="C:cell-cell junction"/>
    <property type="evidence" value="ECO:0000250"/>
    <property type="project" value="UniProtKB"/>
</dbReference>
<dbReference type="GO" id="GO:0005737">
    <property type="term" value="C:cytoplasm"/>
    <property type="evidence" value="ECO:0000250"/>
    <property type="project" value="UniProtKB"/>
</dbReference>
<dbReference type="GO" id="GO:0005789">
    <property type="term" value="C:endoplasmic reticulum membrane"/>
    <property type="evidence" value="ECO:0000250"/>
    <property type="project" value="UniProtKB"/>
</dbReference>
<dbReference type="GO" id="GO:0016020">
    <property type="term" value="C:membrane"/>
    <property type="evidence" value="ECO:0000266"/>
    <property type="project" value="RGD"/>
</dbReference>
<dbReference type="GO" id="GO:0043025">
    <property type="term" value="C:neuronal cell body"/>
    <property type="evidence" value="ECO:0000250"/>
    <property type="project" value="UniProtKB"/>
</dbReference>
<dbReference type="GO" id="GO:0031965">
    <property type="term" value="C:nuclear membrane"/>
    <property type="evidence" value="ECO:0000266"/>
    <property type="project" value="RGD"/>
</dbReference>
<dbReference type="GO" id="GO:0005886">
    <property type="term" value="C:plasma membrane"/>
    <property type="evidence" value="ECO:0000250"/>
    <property type="project" value="UniProtKB"/>
</dbReference>
<dbReference type="GO" id="GO:0008233">
    <property type="term" value="F:peptidase activity"/>
    <property type="evidence" value="ECO:0000266"/>
    <property type="project" value="RGD"/>
</dbReference>
<dbReference type="GO" id="GO:0004252">
    <property type="term" value="F:serine-type endopeptidase activity"/>
    <property type="evidence" value="ECO:0000266"/>
    <property type="project" value="RGD"/>
</dbReference>
<dbReference type="GO" id="GO:0070008">
    <property type="term" value="F:serine-type exopeptidase activity"/>
    <property type="evidence" value="ECO:0007669"/>
    <property type="project" value="InterPro"/>
</dbReference>
<dbReference type="GO" id="GO:0008236">
    <property type="term" value="F:serine-type peptidase activity"/>
    <property type="evidence" value="ECO:0000250"/>
    <property type="project" value="UniProtKB"/>
</dbReference>
<dbReference type="GO" id="GO:0034769">
    <property type="term" value="P:basement membrane disassembly"/>
    <property type="evidence" value="ECO:0000250"/>
    <property type="project" value="UniProtKB"/>
</dbReference>
<dbReference type="GO" id="GO:0042632">
    <property type="term" value="P:cholesterol homeostasis"/>
    <property type="evidence" value="ECO:0000266"/>
    <property type="project" value="RGD"/>
</dbReference>
<dbReference type="GO" id="GO:0090103">
    <property type="term" value="P:cochlea morphogenesis"/>
    <property type="evidence" value="ECO:0000250"/>
    <property type="project" value="UniProtKB"/>
</dbReference>
<dbReference type="GO" id="GO:0050910">
    <property type="term" value="P:detection of mechanical stimulus involved in sensory perception of sound"/>
    <property type="evidence" value="ECO:0000250"/>
    <property type="project" value="UniProtKB"/>
</dbReference>
<dbReference type="GO" id="GO:0060429">
    <property type="term" value="P:epithelium development"/>
    <property type="evidence" value="ECO:0000266"/>
    <property type="project" value="RGD"/>
</dbReference>
<dbReference type="GO" id="GO:0043066">
    <property type="term" value="P:negative regulation of apoptotic process"/>
    <property type="evidence" value="ECO:0000250"/>
    <property type="project" value="UniProtKB"/>
</dbReference>
<dbReference type="GO" id="GO:0050680">
    <property type="term" value="P:negative regulation of epithelial cell proliferation"/>
    <property type="evidence" value="ECO:0000250"/>
    <property type="project" value="UniProtKB"/>
</dbReference>
<dbReference type="GO" id="GO:0010719">
    <property type="term" value="P:negative regulation of epithelial to mesenchymal transition"/>
    <property type="evidence" value="ECO:0000250"/>
    <property type="project" value="UniProtKB"/>
</dbReference>
<dbReference type="GO" id="GO:0097195">
    <property type="term" value="P:pilomotor reflex"/>
    <property type="evidence" value="ECO:0000250"/>
    <property type="project" value="UniProtKB"/>
</dbReference>
<dbReference type="GO" id="GO:0043923">
    <property type="term" value="P:positive regulation by host of viral transcription"/>
    <property type="evidence" value="ECO:0000250"/>
    <property type="project" value="UniProtKB"/>
</dbReference>
<dbReference type="GO" id="GO:0030307">
    <property type="term" value="P:positive regulation of cell growth"/>
    <property type="evidence" value="ECO:0000250"/>
    <property type="project" value="UniProtKB"/>
</dbReference>
<dbReference type="GO" id="GO:0010628">
    <property type="term" value="P:positive regulation of gene expression"/>
    <property type="evidence" value="ECO:0000250"/>
    <property type="project" value="UniProtKB"/>
</dbReference>
<dbReference type="GO" id="GO:2000347">
    <property type="term" value="P:positive regulation of hepatocyte proliferation"/>
    <property type="evidence" value="ECO:0000250"/>
    <property type="project" value="UniProtKB"/>
</dbReference>
<dbReference type="GO" id="GO:0010756">
    <property type="term" value="P:positive regulation of plasminogen activation"/>
    <property type="evidence" value="ECO:0000250"/>
    <property type="project" value="UniProtKB"/>
</dbReference>
<dbReference type="GO" id="GO:2000611">
    <property type="term" value="P:positive regulation of thyroid hormone generation"/>
    <property type="evidence" value="ECO:0000250"/>
    <property type="project" value="UniProtKB"/>
</dbReference>
<dbReference type="GO" id="GO:0071805">
    <property type="term" value="P:potassium ion transmembrane transport"/>
    <property type="evidence" value="ECO:0000250"/>
    <property type="project" value="UniProtKB"/>
</dbReference>
<dbReference type="GO" id="GO:0006508">
    <property type="term" value="P:proteolysis"/>
    <property type="evidence" value="ECO:0000250"/>
    <property type="project" value="UniProtKB"/>
</dbReference>
<dbReference type="GO" id="GO:0008360">
    <property type="term" value="P:regulation of cell shape"/>
    <property type="evidence" value="ECO:0000250"/>
    <property type="project" value="UniProtKB"/>
</dbReference>
<dbReference type="GO" id="GO:0097066">
    <property type="term" value="P:response to thyroid hormone"/>
    <property type="evidence" value="ECO:0000250"/>
    <property type="project" value="UniProtKB"/>
</dbReference>
<dbReference type="GO" id="GO:0007605">
    <property type="term" value="P:sensory perception of sound"/>
    <property type="evidence" value="ECO:0000266"/>
    <property type="project" value="RGD"/>
</dbReference>
<dbReference type="CDD" id="cd00190">
    <property type="entry name" value="Tryp_SPc"/>
    <property type="match status" value="1"/>
</dbReference>
<dbReference type="FunFam" id="3.10.250.10:FF:000020">
    <property type="entry name" value="serine protease hepsin"/>
    <property type="match status" value="1"/>
</dbReference>
<dbReference type="FunFam" id="2.40.10.10:FF:000003">
    <property type="entry name" value="Transmembrane serine protease 3"/>
    <property type="match status" value="1"/>
</dbReference>
<dbReference type="Gene3D" id="3.10.250.10">
    <property type="entry name" value="SRCR-like domain"/>
    <property type="match status" value="1"/>
</dbReference>
<dbReference type="Gene3D" id="2.40.10.10">
    <property type="entry name" value="Trypsin-like serine proteases"/>
    <property type="match status" value="2"/>
</dbReference>
<dbReference type="InterPro" id="IPR015352">
    <property type="entry name" value="Hepsin-SRCR_dom"/>
</dbReference>
<dbReference type="InterPro" id="IPR009003">
    <property type="entry name" value="Peptidase_S1_PA"/>
</dbReference>
<dbReference type="InterPro" id="IPR043504">
    <property type="entry name" value="Peptidase_S1_PA_chymotrypsin"/>
</dbReference>
<dbReference type="InterPro" id="IPR001314">
    <property type="entry name" value="Peptidase_S1A"/>
</dbReference>
<dbReference type="InterPro" id="IPR001190">
    <property type="entry name" value="SRCR"/>
</dbReference>
<dbReference type="InterPro" id="IPR036772">
    <property type="entry name" value="SRCR-like_dom_sf"/>
</dbReference>
<dbReference type="InterPro" id="IPR001254">
    <property type="entry name" value="Trypsin_dom"/>
</dbReference>
<dbReference type="InterPro" id="IPR018114">
    <property type="entry name" value="TRYPSIN_HIS"/>
</dbReference>
<dbReference type="InterPro" id="IPR033116">
    <property type="entry name" value="TRYPSIN_SER"/>
</dbReference>
<dbReference type="PANTHER" id="PTHR24252">
    <property type="entry name" value="ACROSIN-RELATED"/>
    <property type="match status" value="1"/>
</dbReference>
<dbReference type="PANTHER" id="PTHR24252:SF7">
    <property type="entry name" value="HYALIN"/>
    <property type="match status" value="1"/>
</dbReference>
<dbReference type="Pfam" id="PF09272">
    <property type="entry name" value="Hepsin-SRCR"/>
    <property type="match status" value="1"/>
</dbReference>
<dbReference type="Pfam" id="PF00089">
    <property type="entry name" value="Trypsin"/>
    <property type="match status" value="1"/>
</dbReference>
<dbReference type="PRINTS" id="PR00722">
    <property type="entry name" value="CHYMOTRYPSIN"/>
</dbReference>
<dbReference type="SMART" id="SM00202">
    <property type="entry name" value="SR"/>
    <property type="match status" value="1"/>
</dbReference>
<dbReference type="SMART" id="SM00020">
    <property type="entry name" value="Tryp_SPc"/>
    <property type="match status" value="1"/>
</dbReference>
<dbReference type="SUPFAM" id="SSF56487">
    <property type="entry name" value="SRCR-like"/>
    <property type="match status" value="1"/>
</dbReference>
<dbReference type="SUPFAM" id="SSF50494">
    <property type="entry name" value="Trypsin-like serine proteases"/>
    <property type="match status" value="1"/>
</dbReference>
<dbReference type="PROSITE" id="PS50240">
    <property type="entry name" value="TRYPSIN_DOM"/>
    <property type="match status" value="1"/>
</dbReference>
<dbReference type="PROSITE" id="PS00134">
    <property type="entry name" value="TRYPSIN_HIS"/>
    <property type="match status" value="1"/>
</dbReference>
<dbReference type="PROSITE" id="PS00135">
    <property type="entry name" value="TRYPSIN_SER"/>
    <property type="match status" value="1"/>
</dbReference>
<feature type="chain" id="PRO_0000027845" description="Serine protease hepsin non-catalytic chain" evidence="3">
    <location>
        <begin position="1"/>
        <end position="161"/>
    </location>
</feature>
<feature type="chain" id="PRO_0000027846" description="Serine protease hepsin catalytic chain" evidence="3">
    <location>
        <begin position="162"/>
        <end position="416"/>
    </location>
</feature>
<feature type="topological domain" description="Cytoplasmic" evidence="3">
    <location>
        <begin position="1"/>
        <end position="18"/>
    </location>
</feature>
<feature type="transmembrane region" description="Helical; Signal-anchor for type II membrane protein" evidence="3">
    <location>
        <begin position="19"/>
        <end position="39"/>
    </location>
</feature>
<feature type="topological domain" description="Extracellular" evidence="3">
    <location>
        <begin position="40"/>
        <end position="416"/>
    </location>
</feature>
<feature type="domain" description="SRCR">
    <location>
        <begin position="53"/>
        <end position="150"/>
    </location>
</feature>
<feature type="domain" description="Peptidase S1" evidence="4">
    <location>
        <begin position="162"/>
        <end position="404"/>
    </location>
</feature>
<feature type="active site" description="Charge relay system" evidence="2">
    <location>
        <position position="202"/>
    </location>
</feature>
<feature type="active site" description="Charge relay system" evidence="2">
    <location>
        <position position="256"/>
    </location>
</feature>
<feature type="active site" description="Charge relay system" evidence="1">
    <location>
        <position position="352"/>
    </location>
</feature>
<feature type="glycosylation site" description="N-linked (GlcNAc...) asparagine" evidence="3">
    <location>
        <position position="111"/>
    </location>
</feature>
<feature type="disulfide bond" evidence="4">
    <location>
        <begin position="76"/>
        <end position="139"/>
    </location>
</feature>
<feature type="disulfide bond" evidence="4">
    <location>
        <begin position="89"/>
        <end position="149"/>
    </location>
</feature>
<feature type="disulfide bond" evidence="4">
    <location>
        <begin position="118"/>
        <end position="137"/>
    </location>
</feature>
<feature type="disulfide bond" description="Interchain (between non-catalytic and catalytic chains)" evidence="4">
    <location>
        <begin position="152"/>
        <end position="276"/>
    </location>
</feature>
<feature type="disulfide bond" evidence="4">
    <location>
        <begin position="187"/>
        <end position="203"/>
    </location>
</feature>
<feature type="disulfide bond" evidence="4">
    <location>
        <begin position="290"/>
        <end position="358"/>
    </location>
</feature>
<feature type="disulfide bond" evidence="4">
    <location>
        <begin position="321"/>
        <end position="337"/>
    </location>
</feature>
<feature type="disulfide bond" evidence="4">
    <location>
        <begin position="348"/>
        <end position="380"/>
    </location>
</feature>
<sequence>MAKEGGRTAPCCSRPKVAALTVGTLLFLTGIGAASWAIVTILLRSDQEPLYQVQLSPGDSRLLVLDKTEGTWRLLCSSRSNARVAGLGCEEMGFLRALAHSELDVRTAGANGTSGFFCVDEGGLPLAQRLLDVISVCDCPRGRFLTATCQDCGRRKLPVDRIVGGQDSSLGRWPWQVSLRYDGTHLCGGSLLSGDWVLTAAHCFPERNRVLSRWRVFAGAVARTSPHAVQLGVQAVIYHGGYLPFRDPTIDENSNDIALVHLSSSLPLTEYIQPVCLPAAGQALVDGKVCTVTGWGNTQFYGQQAVVLQEARVPIISNEVCNSPDFYGNQIKPKMFCAGYPEGGIDACQGDSGGHFVCEDRISGTSRWRLCGIVSWGTGCALARKPGVYTKVIDFREWIFQAIKTHSEATGMVTQP</sequence>
<proteinExistence type="evidence at transcript level"/>
<protein>
    <recommendedName>
        <fullName>Serine protease hepsin</fullName>
        <ecNumber evidence="2">3.4.21.106</ecNumber>
    </recommendedName>
    <component>
        <recommendedName>
            <fullName>Serine protease hepsin non-catalytic chain</fullName>
        </recommendedName>
    </component>
    <component>
        <recommendedName>
            <fullName>Serine protease hepsin catalytic chain</fullName>
        </recommendedName>
    </component>
</protein>
<evidence type="ECO:0000250" key="1">
    <source>
        <dbReference type="UniProtKB" id="O35453"/>
    </source>
</evidence>
<evidence type="ECO:0000250" key="2">
    <source>
        <dbReference type="UniProtKB" id="P05981"/>
    </source>
</evidence>
<evidence type="ECO:0000255" key="3"/>
<evidence type="ECO:0000255" key="4">
    <source>
        <dbReference type="PROSITE-ProRule" id="PRU00274"/>
    </source>
</evidence>
<evidence type="ECO:0000269" key="5">
    <source>
    </source>
</evidence>
<keyword id="KW-1003">Cell membrane</keyword>
<keyword id="KW-1015">Disulfide bond</keyword>
<keyword id="KW-0325">Glycoprotein</keyword>
<keyword id="KW-0378">Hydrolase</keyword>
<keyword id="KW-0472">Membrane</keyword>
<keyword id="KW-0645">Protease</keyword>
<keyword id="KW-1185">Reference proteome</keyword>
<keyword id="KW-0720">Serine protease</keyword>
<keyword id="KW-0735">Signal-anchor</keyword>
<keyword id="KW-0812">Transmembrane</keyword>
<keyword id="KW-1133">Transmembrane helix</keyword>
<reference key="1">
    <citation type="journal article" date="1993" name="Biochim. Biophys. Acta">
        <title>Cloning and sequence analysis of rat hepsin, a cell surface serine proteinase.</title>
        <authorList>
            <person name="Farley D."/>
            <person name="Reymond F."/>
            <person name="Nick H."/>
        </authorList>
    </citation>
    <scope>NUCLEOTIDE SEQUENCE [MRNA]</scope>
    <source>
        <tissue>Liver</tissue>
    </source>
</reference>
<reference key="2">
    <citation type="journal article" date="2008" name="Hum. Mutat.">
        <title>An integrated genetic and functional analysis of the role of type II transmembrane serine proteases (TMPRSSs) in hearing loss.</title>
        <authorList>
            <person name="Guipponi M."/>
            <person name="Toh M.-Y."/>
            <person name="Tan J."/>
            <person name="Park D."/>
            <person name="Hanson K."/>
            <person name="Ballana E."/>
            <person name="Kwong D."/>
            <person name="Cannon P.Z.F."/>
            <person name="Wu Q."/>
            <person name="Gout A."/>
            <person name="Delorenzi M."/>
            <person name="Speed T.P."/>
            <person name="Smith R.J.H."/>
            <person name="Dahl H.-H.M."/>
            <person name="Petersen M."/>
            <person name="Teasdale R.D."/>
            <person name="Estivill X."/>
            <person name="Park W.J."/>
            <person name="Scott H.S."/>
        </authorList>
    </citation>
    <scope>TISSUE SPECIFICITY</scope>
    <scope>DEVELOPMENTAL STAGE</scope>
</reference>
<organism>
    <name type="scientific">Rattus norvegicus</name>
    <name type="common">Rat</name>
    <dbReference type="NCBI Taxonomy" id="10116"/>
    <lineage>
        <taxon>Eukaryota</taxon>
        <taxon>Metazoa</taxon>
        <taxon>Chordata</taxon>
        <taxon>Craniata</taxon>
        <taxon>Vertebrata</taxon>
        <taxon>Euteleostomi</taxon>
        <taxon>Mammalia</taxon>
        <taxon>Eutheria</taxon>
        <taxon>Euarchontoglires</taxon>
        <taxon>Glires</taxon>
        <taxon>Rodentia</taxon>
        <taxon>Myomorpha</taxon>
        <taxon>Muroidea</taxon>
        <taxon>Muridae</taxon>
        <taxon>Murinae</taxon>
        <taxon>Rattus</taxon>
    </lineage>
</organism>